<dbReference type="EMBL" id="BX666061">
    <property type="status" value="NOT_ANNOTATED_CDS"/>
    <property type="molecule type" value="Genomic_DNA"/>
</dbReference>
<dbReference type="RefSeq" id="NP_001078999.1">
    <property type="nucleotide sequence ID" value="NM_001085530.1"/>
</dbReference>
<dbReference type="RefSeq" id="XP_003689294.1">
    <property type="nucleotide sequence ID" value="XM_003689246.4"/>
</dbReference>
<dbReference type="STRING" id="10090.ENSMUSP00000103661"/>
<dbReference type="GlyGen" id="C0HKD1">
    <property type="glycosylation" value="1 site, 1 O-linked glycan (1 site)"/>
</dbReference>
<dbReference type="iPTMnet" id="C0HKD1"/>
<dbReference type="PhosphoSitePlus" id="C0HKD1"/>
<dbReference type="PaxDb" id="10090-ENSMUSP00000103661"/>
<dbReference type="Ensembl" id="ENSMUST00000108026.3">
    <property type="protein sequence ID" value="ENSMUSP00000103661.3"/>
    <property type="gene ID" value="ENSMUSG00000078746.3"/>
</dbReference>
<dbReference type="Ensembl" id="ENSMUST00000178192.3">
    <property type="protein sequence ID" value="ENSMUSP00000137159.2"/>
    <property type="gene ID" value="ENSMUSG00000093996.3"/>
</dbReference>
<dbReference type="Ensembl" id="ENSMUST00000180201.2">
    <property type="protein sequence ID" value="ENSMUSP00000136864.2"/>
    <property type="gene ID" value="ENSMUSG00000094066.2"/>
</dbReference>
<dbReference type="GeneID" id="545611"/>
<dbReference type="KEGG" id="mmu:545611"/>
<dbReference type="AGR" id="MGI:3701946"/>
<dbReference type="CTD" id="100043920"/>
<dbReference type="CTD" id="100862261"/>
<dbReference type="CTD" id="545611"/>
<dbReference type="MGI" id="MGI:3701946">
    <property type="gene designation" value="Spata31f1b"/>
</dbReference>
<dbReference type="VEuPathDB" id="HostDB:ENSMUSG00000078746"/>
<dbReference type="VEuPathDB" id="HostDB:ENSMUSG00000079774"/>
<dbReference type="VEuPathDB" id="HostDB:ENSMUSG00000093996"/>
<dbReference type="VEuPathDB" id="HostDB:ENSMUSG00000094066"/>
<dbReference type="InParanoid" id="C0HKD1"/>
<dbReference type="OMA" id="CRCHQKV"/>
<dbReference type="OrthoDB" id="73989at9989"/>
<dbReference type="PRO" id="PR:C0HKD1"/>
<dbReference type="Proteomes" id="UP000000589">
    <property type="component" value="Chromosome 4"/>
</dbReference>
<dbReference type="Bgee" id="ENSMUSG00000078746">
    <property type="expression patterns" value="Expressed in spermatid and 14 other cell types or tissues"/>
</dbReference>
<dbReference type="GO" id="GO:0016020">
    <property type="term" value="C:membrane"/>
    <property type="evidence" value="ECO:0007669"/>
    <property type="project" value="UniProtKB-SubCell"/>
</dbReference>
<dbReference type="InterPro" id="IPR039509">
    <property type="entry name" value="SPATA31"/>
</dbReference>
<dbReference type="InterPro" id="IPR027970">
    <property type="entry name" value="SPATA31F3-like"/>
</dbReference>
<dbReference type="PANTHER" id="PTHR21859">
    <property type="entry name" value="ACROSOME-SPECIFIC PROTEIN"/>
    <property type="match status" value="1"/>
</dbReference>
<dbReference type="PANTHER" id="PTHR21859:SF62">
    <property type="entry name" value="FAMILY WITH SEQUENCE SIMILARITY 205, MEMBER A1-RELATED"/>
    <property type="match status" value="1"/>
</dbReference>
<dbReference type="Pfam" id="PF15371">
    <property type="entry name" value="DUF4599"/>
    <property type="match status" value="1"/>
</dbReference>
<dbReference type="Pfam" id="PF14650">
    <property type="entry name" value="FAM75"/>
    <property type="match status" value="2"/>
</dbReference>
<name>31F12_MOUSE</name>
<keyword id="KW-0472">Membrane</keyword>
<keyword id="KW-1185">Reference proteome</keyword>
<keyword id="KW-0812">Transmembrane</keyword>
<keyword id="KW-1133">Transmembrane helix</keyword>
<organism>
    <name type="scientific">Mus musculus</name>
    <name type="common">Mouse</name>
    <dbReference type="NCBI Taxonomy" id="10090"/>
    <lineage>
        <taxon>Eukaryota</taxon>
        <taxon>Metazoa</taxon>
        <taxon>Chordata</taxon>
        <taxon>Craniata</taxon>
        <taxon>Vertebrata</taxon>
        <taxon>Euteleostomi</taxon>
        <taxon>Mammalia</taxon>
        <taxon>Eutheria</taxon>
        <taxon>Euarchontoglires</taxon>
        <taxon>Glires</taxon>
        <taxon>Rodentia</taxon>
        <taxon>Myomorpha</taxon>
        <taxon>Muroidea</taxon>
        <taxon>Muridae</taxon>
        <taxon>Murinae</taxon>
        <taxon>Mus</taxon>
        <taxon>Mus</taxon>
    </lineage>
</organism>
<reference key="1">
    <citation type="journal article" date="2009" name="PLoS Biol.">
        <title>Lineage-specific biology revealed by a finished genome assembly of the mouse.</title>
        <authorList>
            <person name="Church D.M."/>
            <person name="Goodstadt L."/>
            <person name="Hillier L.W."/>
            <person name="Zody M.C."/>
            <person name="Goldstein S."/>
            <person name="She X."/>
            <person name="Bult C.J."/>
            <person name="Agarwala R."/>
            <person name="Cherry J.L."/>
            <person name="DiCuccio M."/>
            <person name="Hlavina W."/>
            <person name="Kapustin Y."/>
            <person name="Meric P."/>
            <person name="Maglott D."/>
            <person name="Birtle Z."/>
            <person name="Marques A.C."/>
            <person name="Graves T."/>
            <person name="Zhou S."/>
            <person name="Teague B."/>
            <person name="Potamousis K."/>
            <person name="Churas C."/>
            <person name="Place M."/>
            <person name="Herschleb J."/>
            <person name="Runnheim R."/>
            <person name="Forrest D."/>
            <person name="Amos-Landgraf J."/>
            <person name="Schwartz D.C."/>
            <person name="Cheng Z."/>
            <person name="Lindblad-Toh K."/>
            <person name="Eichler E.E."/>
            <person name="Ponting C.P."/>
        </authorList>
    </citation>
    <scope>NUCLEOTIDE SEQUENCE [LARGE SCALE GENOMIC DNA]</scope>
    <source>
        <strain>C57BL/6J</strain>
    </source>
</reference>
<gene>
    <name evidence="4" type="primary">Spata31f1b</name>
    <name evidence="4" type="synonym">Fam205a2</name>
    <name evidence="4" type="synonym">Gm13298</name>
    <name evidence="3" type="synonym">Spata31f1-2</name>
</gene>
<accession>C0HKD1</accession>
<accession>A2APU8</accession>
<evidence type="ECO:0000255" key="1"/>
<evidence type="ECO:0000256" key="2">
    <source>
        <dbReference type="SAM" id="MobiDB-lite"/>
    </source>
</evidence>
<evidence type="ECO:0000305" key="3"/>
<evidence type="ECO:0000312" key="4">
    <source>
        <dbReference type="MGI" id="MGI:3701946"/>
    </source>
</evidence>
<sequence length="1308" mass="146156">MLSTMCFLWDTECPLYVYFCFFIIVLIVWQVRQNYQGLKCENRRSCCRRHQKVRQRAKDAASRARRLSREEDEKPCELLSIMKSQSWVPKQGNVRQLLCLDPSCQICEATTLEIRQLLQSKKSQISPALLGLPQRAACLEMPISSESFEWNQDFYSRYSTNSPVVPGNQTLTQLTEELTESTNADGVLLCWTDPLQIGQEFHLADMPMASETLVSPGLEEPVVLMNEEDTVHSNLNYIQQLQDHEALNSQIPFQTLTPQLTVTHPMAVSIVTDAPQPFLSPEVLRLLEIHVKKLMHFQRWGLPRRVEESLKQFMPNPPVYLPPEHNQPVSFILNTSSQDCVHRFEGISPETWYSYMDGQPIQTFWVSEWSSGDQGQRLSCKPIPSPVEKPLLTPDYELLHDLCLSPEGQVDGSQSNLQKKFTQLFCGLPSMHSESLGSTFLCTQGVSKNTLKPPYKEPHFLKVSPPIPLPEAAPPPSSTSPNESLDEPQRAQIGGVPFLTLSECKTLEWHLLQRQLQLQWGLPAVIARPPRVQSHTQYKHKPWNKAKPRETLKFFGPGKPFSALTRELFFIPQHARRLLEFHLQKRLIHLRWGLPQRIQRSINMLLSSTDLQSLPCGGSRLPNVSISQPGKPEAYGSGDTFLPTAGKGTTPMPHLFAKAQEMLKSHDTKCEQIREGKVPACVQSAWKGRIPGDLAAGTLFPNIPQGQPLELQAENNPDLHQEAVSWKPMDLDQEAQAFSGVFIEHCRRPQALSEETIKKLETTLRHKYLAFLSGLQALYCMAPTKATSPTVDQSVITTMPWSVKSPQKPLSQKSPLEALCLSGLEPCTQDDKETSANIAEEFQHGAQGHGRTEKVPPERQPLLNRPYSLDTEIMERVSFYLKRKALDIKLGISLKESVFQEPTATDLESESVQEPLGSPRESTLLQGPPTLCHVPVAPDPDKVCLKQPATAVQVVFQEQNQPSSRAVPHRSARQGSQVHRNMMEAQVHYVQMGTGGEMLNLGEPFSTESQSPGKSKSGYVPTVAGKRKIPGKPKVVGDLGEGDAGLGFSLVSLKTRQDGEQEKRLLHRQLQGSSLQAQTFHLEGACPHSPQESPELQFADPPPEVFMETDSEQDMEDSQSKESIVPEPARTAKAPQPMLSRASQGLPFPRSPTQRKPSQGQPGPGHVPPGHATPASPYTRPSRLPEAGLKNKMKLFFHSIKLKMKSKAHTEPSTVSTPGKVAKTSKENIDRGLPQAKSPTKKTKPEDFRGPKAQFSVVGPCLTPSYILDSKFWPRPRRVGSVSVLGHSYHCPRHCPRLAYANQQRNPP</sequence>
<proteinExistence type="inferred from homology"/>
<comment type="subcellular location">
    <subcellularLocation>
        <location evidence="1">Membrane</location>
        <topology evidence="1">Single-pass membrane protein</topology>
    </subcellularLocation>
</comment>
<comment type="similarity">
    <text evidence="3">Belongs to the SPATA31 family.</text>
</comment>
<feature type="chain" id="PRO_0000341305" description="Spermatogenesis-associated protein 31F1B">
    <location>
        <begin position="1"/>
        <end position="1308"/>
    </location>
</feature>
<feature type="transmembrane region" description="Helical" evidence="1">
    <location>
        <begin position="7"/>
        <end position="27"/>
    </location>
</feature>
<feature type="region of interest" description="Disordered" evidence="2">
    <location>
        <begin position="464"/>
        <end position="488"/>
    </location>
</feature>
<feature type="region of interest" description="Disordered" evidence="2">
    <location>
        <begin position="627"/>
        <end position="648"/>
    </location>
</feature>
<feature type="region of interest" description="Disordered" evidence="2">
    <location>
        <begin position="844"/>
        <end position="863"/>
    </location>
</feature>
<feature type="region of interest" description="Disordered" evidence="2">
    <location>
        <begin position="902"/>
        <end position="927"/>
    </location>
</feature>
<feature type="region of interest" description="Disordered" evidence="2">
    <location>
        <begin position="1005"/>
        <end position="1026"/>
    </location>
</feature>
<feature type="region of interest" description="Disordered" evidence="2">
    <location>
        <begin position="1084"/>
        <end position="1190"/>
    </location>
</feature>
<feature type="region of interest" description="Disordered" evidence="2">
    <location>
        <begin position="1204"/>
        <end position="1254"/>
    </location>
</feature>
<feature type="compositionally biased region" description="Pro residues" evidence="2">
    <location>
        <begin position="465"/>
        <end position="478"/>
    </location>
</feature>
<feature type="compositionally biased region" description="Acidic residues" evidence="2">
    <location>
        <begin position="1107"/>
        <end position="1117"/>
    </location>
</feature>
<protein>
    <recommendedName>
        <fullName evidence="3">Spermatogenesis-associated protein 31F1B</fullName>
    </recommendedName>
    <alternativeName>
        <fullName evidence="4">Protein FAM205A-2</fullName>
    </alternativeName>
    <alternativeName>
        <fullName evidence="3">Protein SPATA31F1-2</fullName>
    </alternativeName>
</protein>